<evidence type="ECO:0000250" key="1">
    <source>
        <dbReference type="UniProtKB" id="P00152"/>
    </source>
</evidence>
<keyword id="KW-0903">Direct protein sequencing</keyword>
<keyword id="KW-0249">Electron transport</keyword>
<keyword id="KW-0349">Heme</keyword>
<keyword id="KW-0408">Iron</keyword>
<keyword id="KW-0479">Metal-binding</keyword>
<keyword id="KW-0813">Transport</keyword>
<accession>P00151</accession>
<organism>
    <name type="scientific">Magnetospirillum fulvum</name>
    <name type="common">Rhodospirillum fulvum</name>
    <dbReference type="NCBI Taxonomy" id="1082"/>
    <lineage>
        <taxon>Bacteria</taxon>
        <taxon>Pseudomonadati</taxon>
        <taxon>Pseudomonadota</taxon>
        <taxon>Alphaproteobacteria</taxon>
        <taxon>Rhodospirillales</taxon>
        <taxon>Rhodospirillaceae</taxon>
        <taxon>Magnetospirillum</taxon>
    </lineage>
</organism>
<sequence length="128" mass="13410">QQSKPEELLKLRQGLMQTLKSQWAPIAGFAAGKADLPADAAQRAENMVLVAKLAPIGWAKGTEALPNSETKAEAFGAKSAQFMEGWKAMAAESTKLAAAAKAGPDALKAQAAATGKVCKACHEEFKQD</sequence>
<feature type="chain" id="PRO_0000108372" description="Cytochrome c'">
    <location>
        <begin position="1"/>
        <end position="128"/>
    </location>
</feature>
<feature type="binding site" evidence="1">
    <location>
        <position position="13"/>
    </location>
    <ligand>
        <name>heme c</name>
        <dbReference type="ChEBI" id="CHEBI:61717"/>
    </ligand>
</feature>
<feature type="binding site" evidence="1">
    <location>
        <position position="17"/>
    </location>
    <ligand>
        <name>heme c</name>
        <dbReference type="ChEBI" id="CHEBI:61717"/>
    </ligand>
</feature>
<feature type="binding site" evidence="1">
    <location>
        <position position="69"/>
    </location>
    <ligand>
        <name>heme c</name>
        <dbReference type="ChEBI" id="CHEBI:61717"/>
    </ligand>
</feature>
<feature type="binding site" evidence="1">
    <location>
        <position position="70"/>
    </location>
    <ligand>
        <name>heme c</name>
        <dbReference type="ChEBI" id="CHEBI:61717"/>
    </ligand>
</feature>
<feature type="binding site" description="covalent" evidence="1">
    <location>
        <position position="118"/>
    </location>
    <ligand>
        <name>heme c</name>
        <dbReference type="ChEBI" id="CHEBI:61717"/>
    </ligand>
</feature>
<feature type="binding site" description="covalent" evidence="1">
    <location>
        <position position="121"/>
    </location>
    <ligand>
        <name>heme c</name>
        <dbReference type="ChEBI" id="CHEBI:61717"/>
    </ligand>
</feature>
<feature type="binding site" description="axial binding residue" evidence="1">
    <location>
        <position position="122"/>
    </location>
    <ligand>
        <name>heme c</name>
        <dbReference type="ChEBI" id="CHEBI:61717"/>
    </ligand>
    <ligandPart>
        <name>Fe</name>
        <dbReference type="ChEBI" id="CHEBI:18248"/>
    </ligandPart>
</feature>
<reference key="1">
    <citation type="book" date="1979" name="Abstracts of the 3rd international symposium on photosynthetic prokaryotes (Oxford)">
        <editorList>
            <person name="Nichols J.M."/>
        </editorList>
        <authorList>
            <person name="Ambler R.P."/>
        </authorList>
    </citation>
    <scope>PROTEIN SEQUENCE</scope>
</reference>
<comment type="function">
    <text>Cytochrome c' is the most widely occurring bacterial c-type cytochrome. Cytochromes c' are high-spin proteins and the heme has no sixth ligand. Their exact function is not known.</text>
</comment>
<comment type="PTM">
    <text evidence="1">Binds 1 heme c group covalently per subunit.</text>
</comment>
<dbReference type="PIR" id="A00144">
    <property type="entry name" value="CCQFCF"/>
</dbReference>
<dbReference type="SMR" id="P00151"/>
<dbReference type="GO" id="GO:0042597">
    <property type="term" value="C:periplasmic space"/>
    <property type="evidence" value="ECO:0007669"/>
    <property type="project" value="InterPro"/>
</dbReference>
<dbReference type="GO" id="GO:0009055">
    <property type="term" value="F:electron transfer activity"/>
    <property type="evidence" value="ECO:0007669"/>
    <property type="project" value="InterPro"/>
</dbReference>
<dbReference type="GO" id="GO:0020037">
    <property type="term" value="F:heme binding"/>
    <property type="evidence" value="ECO:0007669"/>
    <property type="project" value="InterPro"/>
</dbReference>
<dbReference type="GO" id="GO:0005506">
    <property type="term" value="F:iron ion binding"/>
    <property type="evidence" value="ECO:0007669"/>
    <property type="project" value="InterPro"/>
</dbReference>
<dbReference type="GO" id="GO:0022900">
    <property type="term" value="P:electron transport chain"/>
    <property type="evidence" value="ECO:0007669"/>
    <property type="project" value="InterPro"/>
</dbReference>
<dbReference type="Gene3D" id="1.20.120.10">
    <property type="entry name" value="Cytochrome c/b562"/>
    <property type="match status" value="1"/>
</dbReference>
<dbReference type="InterPro" id="IPR010980">
    <property type="entry name" value="Cyt_c/b562"/>
</dbReference>
<dbReference type="InterPro" id="IPR002321">
    <property type="entry name" value="Cyt_c_II"/>
</dbReference>
<dbReference type="InterPro" id="IPR012127">
    <property type="entry name" value="Cyt_c_prime"/>
</dbReference>
<dbReference type="InterPro" id="IPR015984">
    <property type="entry name" value="Cyt_c_prime_subgr"/>
</dbReference>
<dbReference type="Pfam" id="PF01322">
    <property type="entry name" value="Cytochrom_C_2"/>
    <property type="match status" value="1"/>
</dbReference>
<dbReference type="PIRSF" id="PIRSF000027">
    <property type="entry name" value="Cytc_c_prime"/>
    <property type="match status" value="1"/>
</dbReference>
<dbReference type="PRINTS" id="PR00608">
    <property type="entry name" value="CYTCHROMECII"/>
</dbReference>
<dbReference type="SUPFAM" id="SSF47175">
    <property type="entry name" value="Cytochromes"/>
    <property type="match status" value="1"/>
</dbReference>
<dbReference type="PROSITE" id="PS51009">
    <property type="entry name" value="CYTCII"/>
    <property type="match status" value="1"/>
</dbReference>
<proteinExistence type="evidence at protein level"/>
<protein>
    <recommendedName>
        <fullName>Cytochrome c'</fullName>
    </recommendedName>
</protein>
<name>CYCP_MAGFU</name>